<evidence type="ECO:0000255" key="1">
    <source>
        <dbReference type="HAMAP-Rule" id="MF_00712"/>
    </source>
</evidence>
<protein>
    <recommendedName>
        <fullName evidence="1">Probable glycine dehydrogenase (decarboxylating) subunit 1</fullName>
        <ecNumber evidence="1">1.4.4.2</ecNumber>
    </recommendedName>
    <alternativeName>
        <fullName evidence="1">Glycine cleavage system P-protein subunit 1</fullName>
    </alternativeName>
    <alternativeName>
        <fullName evidence="1">Glycine decarboxylase subunit 1</fullName>
    </alternativeName>
    <alternativeName>
        <fullName evidence="1">Glycine dehydrogenase (aminomethyl-transferring) subunit 1</fullName>
    </alternativeName>
</protein>
<keyword id="KW-0560">Oxidoreductase</keyword>
<keyword id="KW-1185">Reference proteome</keyword>
<proteinExistence type="inferred from homology"/>
<accession>Q83B08</accession>
<sequence>MPFIPHTPDDIEKMLAVIGAESIDQLFDEIPSALANIQQVPPGLNEAGITRLMEKREPNKQLCFIGAGAYEHHIPAAVWEIATRGEFYTAYTPYQAEASQGSLQLIYEYQTMMAELMAMDVSNASLYDGASALAEAALMAVRIKRGKAQRILVPASVNPFYRKVLSSIVEQQKINVEIIPFDPTMGIVNSELLKAKNAEGAAAIIIPQPNFFGCLEAVDVLTDWAHANDLLVIASVNPTAMALLKPPGQWGQKGADIVCGEGQPLGVPLASGGPYFGFMCCKKDYVRQLPGRIVGRTVDKKGREGFTLTLQAREQHIRRSKATSNICTNQGLAVVAATIYLSLLGATGLREVALASHTQSRDLFQRLSAVKGVSPVFSSPIFHEFVVRLEKPVEEVLAAMAEQGIQAGFSLKNDYPKLGNGLLICVTDTKTDDDLMAYENALRSIQ</sequence>
<gene>
    <name evidence="1" type="primary">gcvPA</name>
    <name type="ordered locus">CBU_1714</name>
</gene>
<organism>
    <name type="scientific">Coxiella burnetii (strain RSA 493 / Nine Mile phase I)</name>
    <dbReference type="NCBI Taxonomy" id="227377"/>
    <lineage>
        <taxon>Bacteria</taxon>
        <taxon>Pseudomonadati</taxon>
        <taxon>Pseudomonadota</taxon>
        <taxon>Gammaproteobacteria</taxon>
        <taxon>Legionellales</taxon>
        <taxon>Coxiellaceae</taxon>
        <taxon>Coxiella</taxon>
    </lineage>
</organism>
<feature type="chain" id="PRO_0000166964" description="Probable glycine dehydrogenase (decarboxylating) subunit 1">
    <location>
        <begin position="1"/>
        <end position="446"/>
    </location>
</feature>
<name>GCSPA_COXBU</name>
<dbReference type="EC" id="1.4.4.2" evidence="1"/>
<dbReference type="EMBL" id="AE016828">
    <property type="protein sequence ID" value="AAO91209.1"/>
    <property type="molecule type" value="Genomic_DNA"/>
</dbReference>
<dbReference type="RefSeq" id="NP_820695.1">
    <property type="nucleotide sequence ID" value="NC_002971.3"/>
</dbReference>
<dbReference type="RefSeq" id="WP_005770511.1">
    <property type="nucleotide sequence ID" value="NZ_CDBG01000001.1"/>
</dbReference>
<dbReference type="SMR" id="Q83B08"/>
<dbReference type="STRING" id="227377.CBU_1714"/>
<dbReference type="DNASU" id="1209625"/>
<dbReference type="EnsemblBacteria" id="AAO91209">
    <property type="protein sequence ID" value="AAO91209"/>
    <property type="gene ID" value="CBU_1714"/>
</dbReference>
<dbReference type="GeneID" id="1209625"/>
<dbReference type="KEGG" id="cbu:CBU_1714"/>
<dbReference type="PATRIC" id="fig|227377.7.peg.1698"/>
<dbReference type="eggNOG" id="COG0403">
    <property type="taxonomic scope" value="Bacteria"/>
</dbReference>
<dbReference type="HOGENOM" id="CLU_004620_0_2_6"/>
<dbReference type="OrthoDB" id="9801272at2"/>
<dbReference type="Proteomes" id="UP000002671">
    <property type="component" value="Chromosome"/>
</dbReference>
<dbReference type="GO" id="GO:0004375">
    <property type="term" value="F:glycine dehydrogenase (decarboxylating) activity"/>
    <property type="evidence" value="ECO:0007669"/>
    <property type="project" value="UniProtKB-EC"/>
</dbReference>
<dbReference type="GO" id="GO:0019464">
    <property type="term" value="P:glycine decarboxylation via glycine cleavage system"/>
    <property type="evidence" value="ECO:0007669"/>
    <property type="project" value="UniProtKB-UniRule"/>
</dbReference>
<dbReference type="GO" id="GO:0009116">
    <property type="term" value="P:nucleoside metabolic process"/>
    <property type="evidence" value="ECO:0007669"/>
    <property type="project" value="InterPro"/>
</dbReference>
<dbReference type="CDD" id="cd00613">
    <property type="entry name" value="GDC-P"/>
    <property type="match status" value="1"/>
</dbReference>
<dbReference type="FunFam" id="3.40.640.10:FF:000113">
    <property type="entry name" value="Probable glycine dehydrogenase (decarboxylating) subunit 1"/>
    <property type="match status" value="1"/>
</dbReference>
<dbReference type="Gene3D" id="3.90.1150.10">
    <property type="entry name" value="Aspartate Aminotransferase, domain 1"/>
    <property type="match status" value="1"/>
</dbReference>
<dbReference type="Gene3D" id="3.40.640.10">
    <property type="entry name" value="Type I PLP-dependent aspartate aminotransferase-like (Major domain)"/>
    <property type="match status" value="1"/>
</dbReference>
<dbReference type="HAMAP" id="MF_00712">
    <property type="entry name" value="GcvPA"/>
    <property type="match status" value="1"/>
</dbReference>
<dbReference type="InterPro" id="IPR023010">
    <property type="entry name" value="GcvPA"/>
</dbReference>
<dbReference type="InterPro" id="IPR049315">
    <property type="entry name" value="GDC-P_N"/>
</dbReference>
<dbReference type="InterPro" id="IPR020581">
    <property type="entry name" value="GDC_P"/>
</dbReference>
<dbReference type="InterPro" id="IPR015424">
    <property type="entry name" value="PyrdxlP-dep_Trfase"/>
</dbReference>
<dbReference type="InterPro" id="IPR015421">
    <property type="entry name" value="PyrdxlP-dep_Trfase_major"/>
</dbReference>
<dbReference type="InterPro" id="IPR015422">
    <property type="entry name" value="PyrdxlP-dep_Trfase_small"/>
</dbReference>
<dbReference type="NCBIfam" id="NF001696">
    <property type="entry name" value="PRK00451.1"/>
    <property type="match status" value="1"/>
</dbReference>
<dbReference type="PANTHER" id="PTHR42806">
    <property type="entry name" value="GLYCINE CLEAVAGE SYSTEM P-PROTEIN"/>
    <property type="match status" value="1"/>
</dbReference>
<dbReference type="PANTHER" id="PTHR42806:SF1">
    <property type="entry name" value="GLYCINE DEHYDROGENASE (DECARBOXYLATING)"/>
    <property type="match status" value="1"/>
</dbReference>
<dbReference type="Pfam" id="PF02347">
    <property type="entry name" value="GDC-P"/>
    <property type="match status" value="1"/>
</dbReference>
<dbReference type="PIRSF" id="PIRSF006815">
    <property type="entry name" value="GcvPA"/>
    <property type="match status" value="1"/>
</dbReference>
<dbReference type="SUPFAM" id="SSF53383">
    <property type="entry name" value="PLP-dependent transferases"/>
    <property type="match status" value="1"/>
</dbReference>
<reference key="1">
    <citation type="journal article" date="2003" name="Proc. Natl. Acad. Sci. U.S.A.">
        <title>Complete genome sequence of the Q-fever pathogen, Coxiella burnetii.</title>
        <authorList>
            <person name="Seshadri R."/>
            <person name="Paulsen I.T."/>
            <person name="Eisen J.A."/>
            <person name="Read T.D."/>
            <person name="Nelson K.E."/>
            <person name="Nelson W.C."/>
            <person name="Ward N.L."/>
            <person name="Tettelin H."/>
            <person name="Davidsen T.M."/>
            <person name="Beanan M.J."/>
            <person name="DeBoy R.T."/>
            <person name="Daugherty S.C."/>
            <person name="Brinkac L.M."/>
            <person name="Madupu R."/>
            <person name="Dodson R.J."/>
            <person name="Khouri H.M."/>
            <person name="Lee K.H."/>
            <person name="Carty H.A."/>
            <person name="Scanlan D."/>
            <person name="Heinzen R.A."/>
            <person name="Thompson H.A."/>
            <person name="Samuel J.E."/>
            <person name="Fraser C.M."/>
            <person name="Heidelberg J.F."/>
        </authorList>
    </citation>
    <scope>NUCLEOTIDE SEQUENCE [LARGE SCALE GENOMIC DNA]</scope>
    <source>
        <strain>RSA 493 / Nine Mile phase I</strain>
    </source>
</reference>
<comment type="function">
    <text evidence="1">The glycine cleavage system catalyzes the degradation of glycine. The P protein binds the alpha-amino group of glycine through its pyridoxal phosphate cofactor; CO(2) is released and the remaining methylamine moiety is then transferred to the lipoamide cofactor of the H protein.</text>
</comment>
<comment type="catalytic activity">
    <reaction evidence="1">
        <text>N(6)-[(R)-lipoyl]-L-lysyl-[glycine-cleavage complex H protein] + glycine + H(+) = N(6)-[(R)-S(8)-aminomethyldihydrolipoyl]-L-lysyl-[glycine-cleavage complex H protein] + CO2</text>
        <dbReference type="Rhea" id="RHEA:24304"/>
        <dbReference type="Rhea" id="RHEA-COMP:10494"/>
        <dbReference type="Rhea" id="RHEA-COMP:10495"/>
        <dbReference type="ChEBI" id="CHEBI:15378"/>
        <dbReference type="ChEBI" id="CHEBI:16526"/>
        <dbReference type="ChEBI" id="CHEBI:57305"/>
        <dbReference type="ChEBI" id="CHEBI:83099"/>
        <dbReference type="ChEBI" id="CHEBI:83143"/>
        <dbReference type="EC" id="1.4.4.2"/>
    </reaction>
</comment>
<comment type="subunit">
    <text evidence="1">The glycine cleavage system is composed of four proteins: P, T, L and H. In this organism, the P 'protein' is a heterodimer of two subunits.</text>
</comment>
<comment type="similarity">
    <text evidence="1">Belongs to the GcvP family. N-terminal subunit subfamily.</text>
</comment>